<protein>
    <recommendedName>
        <fullName evidence="12">5-hydroxytryptamine receptor 6</fullName>
        <shortName evidence="11">5-HT-6</shortName>
        <shortName evidence="11">5-HT6</shortName>
    </recommendedName>
    <alternativeName>
        <fullName evidence="11">Serotonin receptor 6</fullName>
    </alternativeName>
</protein>
<name>5HT6R_HUMAN</name>
<keyword id="KW-0002">3D-structure</keyword>
<keyword id="KW-1003">Cell membrane</keyword>
<keyword id="KW-1015">Disulfide bond</keyword>
<keyword id="KW-0297">G-protein coupled receptor</keyword>
<keyword id="KW-0472">Membrane</keyword>
<keyword id="KW-1267">Proteomics identification</keyword>
<keyword id="KW-0675">Receptor</keyword>
<keyword id="KW-1185">Reference proteome</keyword>
<keyword id="KW-0807">Transducer</keyword>
<keyword id="KW-0812">Transmembrane</keyword>
<keyword id="KW-1133">Transmembrane helix</keyword>
<evidence type="ECO:0000250" key="1">
    <source>
        <dbReference type="UniProtKB" id="P31388"/>
    </source>
</evidence>
<evidence type="ECO:0000250" key="2">
    <source>
        <dbReference type="UniProtKB" id="Q13639"/>
    </source>
</evidence>
<evidence type="ECO:0000250" key="3">
    <source>
        <dbReference type="UniProtKB" id="Q9R1C8"/>
    </source>
</evidence>
<evidence type="ECO:0000255" key="4">
    <source>
        <dbReference type="PROSITE-ProRule" id="PRU00521"/>
    </source>
</evidence>
<evidence type="ECO:0000256" key="5">
    <source>
        <dbReference type="SAM" id="MobiDB-lite"/>
    </source>
</evidence>
<evidence type="ECO:0000269" key="6">
    <source>
    </source>
</evidence>
<evidence type="ECO:0000269" key="7">
    <source>
    </source>
</evidence>
<evidence type="ECO:0000269" key="8">
    <source>
    </source>
</evidence>
<evidence type="ECO:0000269" key="9">
    <source>
    </source>
</evidence>
<evidence type="ECO:0000269" key="10">
    <source>
    </source>
</evidence>
<evidence type="ECO:0000303" key="11">
    <source>
    </source>
</evidence>
<evidence type="ECO:0000305" key="12"/>
<evidence type="ECO:0000305" key="13">
    <source>
    </source>
</evidence>
<evidence type="ECO:0000312" key="14">
    <source>
        <dbReference type="HGNC" id="HGNC:5301"/>
    </source>
</evidence>
<evidence type="ECO:0007744" key="15">
    <source>
        <dbReference type="PDB" id="7XTB"/>
    </source>
</evidence>
<evidence type="ECO:0007744" key="16">
    <source>
        <dbReference type="PDB" id="7YS6"/>
    </source>
</evidence>
<evidence type="ECO:0007744" key="17">
    <source>
        <dbReference type="PDB" id="8JLZ"/>
    </source>
</evidence>
<evidence type="ECO:0007829" key="18">
    <source>
        <dbReference type="PDB" id="7YS6"/>
    </source>
</evidence>
<evidence type="ECO:0007829" key="19">
    <source>
        <dbReference type="PDB" id="8JLZ"/>
    </source>
</evidence>
<accession>P50406</accession>
<accession>Q13640</accession>
<accession>Q5TGZ1</accession>
<dbReference type="EMBL" id="L41147">
    <property type="protein sequence ID" value="AAA92622.1"/>
    <property type="molecule type" value="mRNA"/>
</dbReference>
<dbReference type="EMBL" id="AY429105">
    <property type="protein sequence ID" value="AAR07900.1"/>
    <property type="molecule type" value="mRNA"/>
</dbReference>
<dbReference type="EMBL" id="AL031727">
    <property type="status" value="NOT_ANNOTATED_CDS"/>
    <property type="molecule type" value="Genomic_DNA"/>
</dbReference>
<dbReference type="EMBL" id="CH471134">
    <property type="protein sequence ID" value="EAW94896.1"/>
    <property type="molecule type" value="Genomic_DNA"/>
</dbReference>
<dbReference type="EMBL" id="BC074995">
    <property type="protein sequence ID" value="AAH74995.1"/>
    <property type="molecule type" value="mRNA"/>
</dbReference>
<dbReference type="EMBL" id="BC074996">
    <property type="protein sequence ID" value="AAH74996.1"/>
    <property type="molecule type" value="mRNA"/>
</dbReference>
<dbReference type="EMBL" id="Z49119">
    <property type="protein sequence ID" value="CAA88929.1"/>
    <property type="molecule type" value="mRNA"/>
</dbReference>
<dbReference type="CCDS" id="CCDS197.1"/>
<dbReference type="PIR" id="JC5520">
    <property type="entry name" value="JC5520"/>
</dbReference>
<dbReference type="RefSeq" id="NP_000862.1">
    <property type="nucleotide sequence ID" value="NM_000871.3"/>
</dbReference>
<dbReference type="PDB" id="7XTB">
    <property type="method" value="EM"/>
    <property type="resolution" value="3.30 A"/>
    <property type="chains" value="R=2-440"/>
</dbReference>
<dbReference type="PDB" id="7YS6">
    <property type="method" value="EM"/>
    <property type="resolution" value="3.00 A"/>
    <property type="chains" value="A=24-345"/>
</dbReference>
<dbReference type="PDB" id="8JLZ">
    <property type="method" value="EM"/>
    <property type="resolution" value="3.09 A"/>
    <property type="chains" value="R=1-440"/>
</dbReference>
<dbReference type="PDBsum" id="7XTB"/>
<dbReference type="PDBsum" id="7YS6"/>
<dbReference type="PDBsum" id="8JLZ"/>
<dbReference type="EMDB" id="EMD-33445"/>
<dbReference type="EMDB" id="EMD-34073"/>
<dbReference type="EMDB" id="EMD-36409"/>
<dbReference type="SMR" id="P50406"/>
<dbReference type="BioGRID" id="109594">
    <property type="interactions" value="53"/>
</dbReference>
<dbReference type="CORUM" id="P50406"/>
<dbReference type="FunCoup" id="P50406">
    <property type="interactions" value="1071"/>
</dbReference>
<dbReference type="IntAct" id="P50406">
    <property type="interactions" value="31"/>
</dbReference>
<dbReference type="MINT" id="P50406"/>
<dbReference type="STRING" id="9606.ENSP00000289753"/>
<dbReference type="BindingDB" id="P50406"/>
<dbReference type="ChEMBL" id="CHEMBL3371"/>
<dbReference type="DrugBank" id="DB14010">
    <property type="generic name" value="5-methoxy-N,N-dimethyltryptamine"/>
</dbReference>
<dbReference type="DrugBank" id="DB00321">
    <property type="generic name" value="Amitriptyline"/>
</dbReference>
<dbReference type="DrugBank" id="DB00543">
    <property type="generic name" value="Amoxapine"/>
</dbReference>
<dbReference type="DrugBank" id="DB01238">
    <property type="generic name" value="Aripiprazole"/>
</dbReference>
<dbReference type="DrugBank" id="DB14185">
    <property type="generic name" value="Aripiprazole lauroxil"/>
</dbReference>
<dbReference type="DrugBank" id="DB06216">
    <property type="generic name" value="Asenapine"/>
</dbReference>
<dbReference type="DrugBank" id="DB01445">
    <property type="generic name" value="Bufotenine"/>
</dbReference>
<dbReference type="DrugBank" id="DB12229">
    <property type="generic name" value="Cerlapirdine"/>
</dbReference>
<dbReference type="DrugBank" id="DB00477">
    <property type="generic name" value="Chlorpromazine"/>
</dbReference>
<dbReference type="DrugBank" id="DB01239">
    <property type="generic name" value="Chlorprothixene"/>
</dbReference>
<dbReference type="DrugBank" id="DB15971">
    <property type="generic name" value="Clorotepine"/>
</dbReference>
<dbReference type="DrugBank" id="DB00363">
    <property type="generic name" value="Clozapine"/>
</dbReference>
<dbReference type="DrugBank" id="DB00924">
    <property type="generic name" value="Cyclobenzaprine"/>
</dbReference>
<dbReference type="DrugBank" id="DB01460">
    <property type="generic name" value="Diethyltryptamine"/>
</dbReference>
<dbReference type="DrugBank" id="DB11273">
    <property type="generic name" value="Dihydroergocornine"/>
</dbReference>
<dbReference type="DrugBank" id="DB13345">
    <property type="generic name" value="Dihydroergocristine"/>
</dbReference>
<dbReference type="DrugBank" id="DB01488">
    <property type="generic name" value="Dimethyltryptamine"/>
</dbReference>
<dbReference type="DrugBank" id="DB01142">
    <property type="generic name" value="Doxepin"/>
</dbReference>
<dbReference type="DrugBank" id="DB01049">
    <property type="generic name" value="Ergoloid mesylate"/>
</dbReference>
<dbReference type="DrugBank" id="DB12141">
    <property type="generic name" value="Gilteritinib"/>
</dbReference>
<dbReference type="DrugBank" id="DB00502">
    <property type="generic name" value="Haloperidol"/>
</dbReference>
<dbReference type="DrugBank" id="DB04946">
    <property type="generic name" value="Iloperidone"/>
</dbReference>
<dbReference type="DrugBank" id="DB00458">
    <property type="generic name" value="Imipramine"/>
</dbReference>
<dbReference type="DrugBank" id="DB12680">
    <property type="generic name" value="Intepirdine"/>
</dbReference>
<dbReference type="DrugBank" id="DB16214">
    <property type="generic name" value="Landipirdine"/>
</dbReference>
<dbReference type="DrugBank" id="DB11725">
    <property type="generic name" value="Latrepirdine"/>
</dbReference>
<dbReference type="DrugBank" id="DB00408">
    <property type="generic name" value="Loxapine"/>
</dbReference>
<dbReference type="DrugBank" id="DB04829">
    <property type="generic name" value="Lysergic acid diethylamide"/>
</dbReference>
<dbReference type="DrugBank" id="DB12110">
    <property type="generic name" value="m-Chlorophenylpiperazine"/>
</dbReference>
<dbReference type="DrugBank" id="DB06148">
    <property type="generic name" value="Mianserin"/>
</dbReference>
<dbReference type="DrugBank" id="DB00334">
    <property type="generic name" value="Olanzapine"/>
</dbReference>
<dbReference type="DrugBank" id="DB00715">
    <property type="generic name" value="Paroxetine"/>
</dbReference>
<dbReference type="DrugBank" id="DB05993">
    <property type="generic name" value="PRX-07034"/>
</dbReference>
<dbReference type="DrugBank" id="DB01224">
    <property type="generic name" value="Quetiapine"/>
</dbReference>
<dbReference type="DrugBank" id="DB08839">
    <property type="generic name" value="Serotonin"/>
</dbReference>
<dbReference type="DrugBank" id="DB06144">
    <property type="generic name" value="Sertindole"/>
</dbReference>
<dbReference type="DrugBank" id="DB09304">
    <property type="generic name" value="Setiptiline"/>
</dbReference>
<dbReference type="DrugBank" id="DB05042">
    <property type="generic name" value="SGS518"/>
</dbReference>
<dbReference type="DrugBank" id="DB17056">
    <property type="generic name" value="Spiperone"/>
</dbReference>
<dbReference type="DrugBank" id="DB06140">
    <property type="generic name" value="SUVN-502"/>
</dbReference>
<dbReference type="DrugBank" id="DB13025">
    <property type="generic name" value="Tiapride"/>
</dbReference>
<dbReference type="DrugBank" id="DB00246">
    <property type="generic name" value="Ziprasidone"/>
</dbReference>
<dbReference type="DrugBank" id="DB09225">
    <property type="generic name" value="Zotepine"/>
</dbReference>
<dbReference type="DrugCentral" id="P50406"/>
<dbReference type="GuidetoPHARMACOLOGY" id="11"/>
<dbReference type="iPTMnet" id="P50406"/>
<dbReference type="PhosphoSitePlus" id="P50406"/>
<dbReference type="BioMuta" id="HTR6"/>
<dbReference type="DMDM" id="1703010"/>
<dbReference type="jPOST" id="P50406"/>
<dbReference type="MassIVE" id="P50406"/>
<dbReference type="PaxDb" id="9606-ENSP00000289753"/>
<dbReference type="PeptideAtlas" id="P50406"/>
<dbReference type="ProteomicsDB" id="56219"/>
<dbReference type="Antibodypedia" id="15009">
    <property type="antibodies" value="107 antibodies from 29 providers"/>
</dbReference>
<dbReference type="DNASU" id="3362"/>
<dbReference type="Ensembl" id="ENST00000289753.2">
    <property type="protein sequence ID" value="ENSP00000289753.1"/>
    <property type="gene ID" value="ENSG00000158748.4"/>
</dbReference>
<dbReference type="GeneID" id="3362"/>
<dbReference type="KEGG" id="hsa:3362"/>
<dbReference type="MANE-Select" id="ENST00000289753.2">
    <property type="protein sequence ID" value="ENSP00000289753.1"/>
    <property type="RefSeq nucleotide sequence ID" value="NM_000871.3"/>
    <property type="RefSeq protein sequence ID" value="NP_000862.1"/>
</dbReference>
<dbReference type="UCSC" id="uc001bcl.5">
    <property type="organism name" value="human"/>
</dbReference>
<dbReference type="AGR" id="HGNC:5301"/>
<dbReference type="CTD" id="3362"/>
<dbReference type="DisGeNET" id="3362"/>
<dbReference type="GeneCards" id="HTR6"/>
<dbReference type="HGNC" id="HGNC:5301">
    <property type="gene designation" value="HTR6"/>
</dbReference>
<dbReference type="HPA" id="ENSG00000158748">
    <property type="expression patterns" value="Tissue enriched (brain)"/>
</dbReference>
<dbReference type="MIM" id="601109">
    <property type="type" value="gene"/>
</dbReference>
<dbReference type="neXtProt" id="NX_P50406"/>
<dbReference type="OpenTargets" id="ENSG00000158748"/>
<dbReference type="PharmGKB" id="PA29560"/>
<dbReference type="VEuPathDB" id="HostDB:ENSG00000158748"/>
<dbReference type="eggNOG" id="KOG3656">
    <property type="taxonomic scope" value="Eukaryota"/>
</dbReference>
<dbReference type="GeneTree" id="ENSGT01010000222287"/>
<dbReference type="HOGENOM" id="CLU_009579_11_0_1"/>
<dbReference type="InParanoid" id="P50406"/>
<dbReference type="OMA" id="KMGWHEL"/>
<dbReference type="OrthoDB" id="10018303at2759"/>
<dbReference type="PAN-GO" id="P50406">
    <property type="GO annotations" value="6 GO annotations based on evolutionary models"/>
</dbReference>
<dbReference type="PhylomeDB" id="P50406"/>
<dbReference type="TreeFam" id="TF351753"/>
<dbReference type="PathwayCommons" id="P50406"/>
<dbReference type="Reactome" id="R-HSA-390666">
    <property type="pathway name" value="Serotonin receptors"/>
</dbReference>
<dbReference type="Reactome" id="R-HSA-418555">
    <property type="pathway name" value="G alpha (s) signalling events"/>
</dbReference>
<dbReference type="SignaLink" id="P50406"/>
<dbReference type="SIGNOR" id="P50406"/>
<dbReference type="BioGRID-ORCS" id="3362">
    <property type="hits" value="5 hits in 1149 CRISPR screens"/>
</dbReference>
<dbReference type="GeneWiki" id="5-HT6_receptor"/>
<dbReference type="GenomeRNAi" id="3362"/>
<dbReference type="Pharos" id="P50406">
    <property type="development level" value="Tchem"/>
</dbReference>
<dbReference type="PRO" id="PR:P50406"/>
<dbReference type="Proteomes" id="UP000005640">
    <property type="component" value="Chromosome 1"/>
</dbReference>
<dbReference type="RNAct" id="P50406">
    <property type="molecule type" value="protein"/>
</dbReference>
<dbReference type="Bgee" id="ENSG00000158748">
    <property type="expression patterns" value="Expressed in type B pancreatic cell and 59 other cell types or tissues"/>
</dbReference>
<dbReference type="GO" id="GO:0005929">
    <property type="term" value="C:cilium"/>
    <property type="evidence" value="ECO:0007669"/>
    <property type="project" value="Ensembl"/>
</dbReference>
<dbReference type="GO" id="GO:0030425">
    <property type="term" value="C:dendrite"/>
    <property type="evidence" value="ECO:0000318"/>
    <property type="project" value="GO_Central"/>
</dbReference>
<dbReference type="GO" id="GO:0005886">
    <property type="term" value="C:plasma membrane"/>
    <property type="evidence" value="ECO:0000314"/>
    <property type="project" value="UniProtKB"/>
</dbReference>
<dbReference type="GO" id="GO:0045202">
    <property type="term" value="C:synapse"/>
    <property type="evidence" value="ECO:0007669"/>
    <property type="project" value="GOC"/>
</dbReference>
<dbReference type="GO" id="GO:0004993">
    <property type="term" value="F:G protein-coupled serotonin receptor activity"/>
    <property type="evidence" value="ECO:0000314"/>
    <property type="project" value="UniProtKB"/>
</dbReference>
<dbReference type="GO" id="GO:0004969">
    <property type="term" value="F:histamine receptor activity"/>
    <property type="evidence" value="ECO:0000304"/>
    <property type="project" value="ProtInc"/>
</dbReference>
<dbReference type="GO" id="GO:0030594">
    <property type="term" value="F:neurotransmitter receptor activity"/>
    <property type="evidence" value="ECO:0000318"/>
    <property type="project" value="GO_Central"/>
</dbReference>
<dbReference type="GO" id="GO:0099589">
    <property type="term" value="F:serotonin receptor activity"/>
    <property type="evidence" value="ECO:0000314"/>
    <property type="project" value="UniProt"/>
</dbReference>
<dbReference type="GO" id="GO:0007192">
    <property type="term" value="P:adenylate cyclase-activating serotonin receptor signaling pathway"/>
    <property type="evidence" value="ECO:0000314"/>
    <property type="project" value="UniProtKB"/>
</dbReference>
<dbReference type="GO" id="GO:0007188">
    <property type="term" value="P:adenylate cyclase-modulating G protein-coupled receptor signaling pathway"/>
    <property type="evidence" value="ECO:0000318"/>
    <property type="project" value="GO_Central"/>
</dbReference>
<dbReference type="GO" id="GO:0021795">
    <property type="term" value="P:cerebral cortex cell migration"/>
    <property type="evidence" value="ECO:0000250"/>
    <property type="project" value="UniProtKB"/>
</dbReference>
<dbReference type="GO" id="GO:0007268">
    <property type="term" value="P:chemical synaptic transmission"/>
    <property type="evidence" value="ECO:0000318"/>
    <property type="project" value="GO_Central"/>
</dbReference>
<dbReference type="GO" id="GO:0007187">
    <property type="term" value="P:G protein-coupled receptor signaling pathway, coupled to cyclic nucleotide second messenger"/>
    <property type="evidence" value="ECO:0000318"/>
    <property type="project" value="GO_Central"/>
</dbReference>
<dbReference type="GO" id="GO:0032008">
    <property type="term" value="P:positive regulation of TOR signaling"/>
    <property type="evidence" value="ECO:0000314"/>
    <property type="project" value="UniProtKB"/>
</dbReference>
<dbReference type="CDD" id="cd15054">
    <property type="entry name" value="7tmA_5-HT6"/>
    <property type="match status" value="1"/>
</dbReference>
<dbReference type="FunFam" id="1.20.1070.10:FF:000148">
    <property type="entry name" value="5-hydroxytryptamine receptor 6"/>
    <property type="match status" value="1"/>
</dbReference>
<dbReference type="Gene3D" id="1.20.1070.10">
    <property type="entry name" value="Rhodopsin 7-helix transmembrane proteins"/>
    <property type="match status" value="1"/>
</dbReference>
<dbReference type="InterPro" id="IPR002232">
    <property type="entry name" value="5HT6_rcpt"/>
</dbReference>
<dbReference type="InterPro" id="IPR000276">
    <property type="entry name" value="GPCR_Rhodpsn"/>
</dbReference>
<dbReference type="InterPro" id="IPR017452">
    <property type="entry name" value="GPCR_Rhodpsn_7TM"/>
</dbReference>
<dbReference type="PANTHER" id="PTHR24247">
    <property type="entry name" value="5-HYDROXYTRYPTAMINE RECEPTOR"/>
    <property type="match status" value="1"/>
</dbReference>
<dbReference type="PANTHER" id="PTHR24247:SF236">
    <property type="entry name" value="5-HYDROXYTRYPTAMINE RECEPTOR 6"/>
    <property type="match status" value="1"/>
</dbReference>
<dbReference type="Pfam" id="PF00001">
    <property type="entry name" value="7tm_1"/>
    <property type="match status" value="1"/>
</dbReference>
<dbReference type="PRINTS" id="PR01102">
    <property type="entry name" value="5HT6RECEPTR"/>
</dbReference>
<dbReference type="PRINTS" id="PR00237">
    <property type="entry name" value="GPCRRHODOPSN"/>
</dbReference>
<dbReference type="SMART" id="SM01381">
    <property type="entry name" value="7TM_GPCR_Srsx"/>
    <property type="match status" value="1"/>
</dbReference>
<dbReference type="SUPFAM" id="SSF81321">
    <property type="entry name" value="Family A G protein-coupled receptor-like"/>
    <property type="match status" value="1"/>
</dbReference>
<dbReference type="PROSITE" id="PS00237">
    <property type="entry name" value="G_PROTEIN_RECEP_F1_1"/>
    <property type="match status" value="1"/>
</dbReference>
<dbReference type="PROSITE" id="PS50262">
    <property type="entry name" value="G_PROTEIN_RECEP_F1_2"/>
    <property type="match status" value="1"/>
</dbReference>
<reference key="1">
    <citation type="journal article" date="1996" name="J. Neurochem.">
        <title>Cloning, characterization, and chromosomal localization of a human 5-HT6 serotonin receptor.</title>
        <authorList>
            <person name="Kohen R."/>
            <person name="Metcalf M.A."/>
            <person name="Khan N."/>
            <person name="Druck T."/>
            <person name="Huebner K."/>
            <person name="Lachowicz J.E."/>
            <person name="Sibley D.R."/>
            <person name="Roth B."/>
            <person name="Hamblin M.W."/>
        </authorList>
    </citation>
    <scope>NUCLEOTIDE SEQUENCE [MRNA]</scope>
    <scope>FUNCTION</scope>
    <scope>TISSUE SPECIFICITY</scope>
    <source>
        <tissue>Corpus striatum</tissue>
    </source>
</reference>
<reference key="2">
    <citation type="submission" date="2003-10" db="EMBL/GenBank/DDBJ databases">
        <title>cDNA clones of human proteins involved in signal transduction sequenced by the Guthrie cDNA resource center (www.cdna.org).</title>
        <authorList>
            <person name="Kopatz S.A."/>
            <person name="Aronstam R.S."/>
            <person name="Sharma S.V."/>
        </authorList>
    </citation>
    <scope>NUCLEOTIDE SEQUENCE [LARGE SCALE MRNA]</scope>
    <source>
        <tissue>Brain</tissue>
    </source>
</reference>
<reference key="3">
    <citation type="journal article" date="2006" name="Nature">
        <title>The DNA sequence and biological annotation of human chromosome 1.</title>
        <authorList>
            <person name="Gregory S.G."/>
            <person name="Barlow K.F."/>
            <person name="McLay K.E."/>
            <person name="Kaul R."/>
            <person name="Swarbreck D."/>
            <person name="Dunham A."/>
            <person name="Scott C.E."/>
            <person name="Howe K.L."/>
            <person name="Woodfine K."/>
            <person name="Spencer C.C.A."/>
            <person name="Jones M.C."/>
            <person name="Gillson C."/>
            <person name="Searle S."/>
            <person name="Zhou Y."/>
            <person name="Kokocinski F."/>
            <person name="McDonald L."/>
            <person name="Evans R."/>
            <person name="Phillips K."/>
            <person name="Atkinson A."/>
            <person name="Cooper R."/>
            <person name="Jones C."/>
            <person name="Hall R.E."/>
            <person name="Andrews T.D."/>
            <person name="Lloyd C."/>
            <person name="Ainscough R."/>
            <person name="Almeida J.P."/>
            <person name="Ambrose K.D."/>
            <person name="Anderson F."/>
            <person name="Andrew R.W."/>
            <person name="Ashwell R.I.S."/>
            <person name="Aubin K."/>
            <person name="Babbage A.K."/>
            <person name="Bagguley C.L."/>
            <person name="Bailey J."/>
            <person name="Beasley H."/>
            <person name="Bethel G."/>
            <person name="Bird C.P."/>
            <person name="Bray-Allen S."/>
            <person name="Brown J.Y."/>
            <person name="Brown A.J."/>
            <person name="Buckley D."/>
            <person name="Burton J."/>
            <person name="Bye J."/>
            <person name="Carder C."/>
            <person name="Chapman J.C."/>
            <person name="Clark S.Y."/>
            <person name="Clarke G."/>
            <person name="Clee C."/>
            <person name="Cobley V."/>
            <person name="Collier R.E."/>
            <person name="Corby N."/>
            <person name="Coville G.J."/>
            <person name="Davies J."/>
            <person name="Deadman R."/>
            <person name="Dunn M."/>
            <person name="Earthrowl M."/>
            <person name="Ellington A.G."/>
            <person name="Errington H."/>
            <person name="Frankish A."/>
            <person name="Frankland J."/>
            <person name="French L."/>
            <person name="Garner P."/>
            <person name="Garnett J."/>
            <person name="Gay L."/>
            <person name="Ghori M.R.J."/>
            <person name="Gibson R."/>
            <person name="Gilby L.M."/>
            <person name="Gillett W."/>
            <person name="Glithero R.J."/>
            <person name="Grafham D.V."/>
            <person name="Griffiths C."/>
            <person name="Griffiths-Jones S."/>
            <person name="Grocock R."/>
            <person name="Hammond S."/>
            <person name="Harrison E.S.I."/>
            <person name="Hart E."/>
            <person name="Haugen E."/>
            <person name="Heath P.D."/>
            <person name="Holmes S."/>
            <person name="Holt K."/>
            <person name="Howden P.J."/>
            <person name="Hunt A.R."/>
            <person name="Hunt S.E."/>
            <person name="Hunter G."/>
            <person name="Isherwood J."/>
            <person name="James R."/>
            <person name="Johnson C."/>
            <person name="Johnson D."/>
            <person name="Joy A."/>
            <person name="Kay M."/>
            <person name="Kershaw J.K."/>
            <person name="Kibukawa M."/>
            <person name="Kimberley A.M."/>
            <person name="King A."/>
            <person name="Knights A.J."/>
            <person name="Lad H."/>
            <person name="Laird G."/>
            <person name="Lawlor S."/>
            <person name="Leongamornlert D.A."/>
            <person name="Lloyd D.M."/>
            <person name="Loveland J."/>
            <person name="Lovell J."/>
            <person name="Lush M.J."/>
            <person name="Lyne R."/>
            <person name="Martin S."/>
            <person name="Mashreghi-Mohammadi M."/>
            <person name="Matthews L."/>
            <person name="Matthews N.S.W."/>
            <person name="McLaren S."/>
            <person name="Milne S."/>
            <person name="Mistry S."/>
            <person name="Moore M.J.F."/>
            <person name="Nickerson T."/>
            <person name="O'Dell C.N."/>
            <person name="Oliver K."/>
            <person name="Palmeiri A."/>
            <person name="Palmer S.A."/>
            <person name="Parker A."/>
            <person name="Patel D."/>
            <person name="Pearce A.V."/>
            <person name="Peck A.I."/>
            <person name="Pelan S."/>
            <person name="Phelps K."/>
            <person name="Phillimore B.J."/>
            <person name="Plumb R."/>
            <person name="Rajan J."/>
            <person name="Raymond C."/>
            <person name="Rouse G."/>
            <person name="Saenphimmachak C."/>
            <person name="Sehra H.K."/>
            <person name="Sheridan E."/>
            <person name="Shownkeen R."/>
            <person name="Sims S."/>
            <person name="Skuce C.D."/>
            <person name="Smith M."/>
            <person name="Steward C."/>
            <person name="Subramanian S."/>
            <person name="Sycamore N."/>
            <person name="Tracey A."/>
            <person name="Tromans A."/>
            <person name="Van Helmond Z."/>
            <person name="Wall M."/>
            <person name="Wallis J.M."/>
            <person name="White S."/>
            <person name="Whitehead S.L."/>
            <person name="Wilkinson J.E."/>
            <person name="Willey D.L."/>
            <person name="Williams H."/>
            <person name="Wilming L."/>
            <person name="Wray P.W."/>
            <person name="Wu Z."/>
            <person name="Coulson A."/>
            <person name="Vaudin M."/>
            <person name="Sulston J.E."/>
            <person name="Durbin R.M."/>
            <person name="Hubbard T."/>
            <person name="Wooster R."/>
            <person name="Dunham I."/>
            <person name="Carter N.P."/>
            <person name="McVean G."/>
            <person name="Ross M.T."/>
            <person name="Harrow J."/>
            <person name="Olson M.V."/>
            <person name="Beck S."/>
            <person name="Rogers J."/>
            <person name="Bentley D.R."/>
        </authorList>
    </citation>
    <scope>NUCLEOTIDE SEQUENCE [LARGE SCALE GENOMIC DNA]</scope>
</reference>
<reference key="4">
    <citation type="submission" date="2005-07" db="EMBL/GenBank/DDBJ databases">
        <authorList>
            <person name="Mural R.J."/>
            <person name="Istrail S."/>
            <person name="Sutton G.G."/>
            <person name="Florea L."/>
            <person name="Halpern A.L."/>
            <person name="Mobarry C.M."/>
            <person name="Lippert R."/>
            <person name="Walenz B."/>
            <person name="Shatkay H."/>
            <person name="Dew I."/>
            <person name="Miller J.R."/>
            <person name="Flanigan M.J."/>
            <person name="Edwards N.J."/>
            <person name="Bolanos R."/>
            <person name="Fasulo D."/>
            <person name="Halldorsson B.V."/>
            <person name="Hannenhalli S."/>
            <person name="Turner R."/>
            <person name="Yooseph S."/>
            <person name="Lu F."/>
            <person name="Nusskern D.R."/>
            <person name="Shue B.C."/>
            <person name="Zheng X.H."/>
            <person name="Zhong F."/>
            <person name="Delcher A.L."/>
            <person name="Huson D.H."/>
            <person name="Kravitz S.A."/>
            <person name="Mouchard L."/>
            <person name="Reinert K."/>
            <person name="Remington K.A."/>
            <person name="Clark A.G."/>
            <person name="Waterman M.S."/>
            <person name="Eichler E.E."/>
            <person name="Adams M.D."/>
            <person name="Hunkapiller M.W."/>
            <person name="Myers E.W."/>
            <person name="Venter J.C."/>
        </authorList>
    </citation>
    <scope>NUCLEOTIDE SEQUENCE [LARGE SCALE GENOMIC DNA]</scope>
</reference>
<reference key="5">
    <citation type="journal article" date="2004" name="Genome Res.">
        <title>The status, quality, and expansion of the NIH full-length cDNA project: the Mammalian Gene Collection (MGC).</title>
        <authorList>
            <consortium name="The MGC Project Team"/>
        </authorList>
    </citation>
    <scope>NUCLEOTIDE SEQUENCE [LARGE SCALE MRNA]</scope>
    <source>
        <tissue>Fetal brain</tissue>
    </source>
</reference>
<reference key="6">
    <citation type="journal article" date="1995" name="FEBS Lett.">
        <title>Expression of serotonin receptor mRNAs in blood vessels.</title>
        <authorList>
            <person name="Ullmer C."/>
            <person name="Schmuck K."/>
            <person name="Kalkman H.O."/>
            <person name="Luebbert H."/>
        </authorList>
    </citation>
    <scope>NUCLEOTIDE SEQUENCE [MRNA] OF 215-280</scope>
    <source>
        <tissue>Corpus striatum</tissue>
    </source>
</reference>
<reference key="7">
    <citation type="journal article" date="2012" name="EMBO Mol. Med.">
        <title>5-HT(6) receptor recruitment of mTOR as a mechanism for perturbed cognition in schizophrenia.</title>
        <authorList>
            <person name="Meffre J."/>
            <person name="Chaumont-Dubel S."/>
            <person name="Mannoury la Cour C."/>
            <person name="Loiseau F."/>
            <person name="Watson D.J."/>
            <person name="Dekeyne A."/>
            <person name="Seveno M."/>
            <person name="Rivet J.M."/>
            <person name="Gaven F."/>
            <person name="Deleris P."/>
            <person name="Herve D."/>
            <person name="Fone K.C."/>
            <person name="Bockaert J."/>
            <person name="Millan M.J."/>
            <person name="Marin P."/>
        </authorList>
    </citation>
    <scope>FUNCTION</scope>
    <scope>INTERACTION WITH MTOR; RPTOR AND NF1</scope>
</reference>
<reference evidence="15" key="8">
    <citation type="journal article" date="2022" name="Mol. Cell">
        <title>GPCRs steer Gi and Gs selectivity via TM5-TM6 switches as revealed by structures of serotonin receptors.</title>
        <authorList>
            <person name="Huang S."/>
            <person name="Xu P."/>
            <person name="Shen D.D."/>
            <person name="Simon I.A."/>
            <person name="Mao C."/>
            <person name="Tan Y."/>
            <person name="Zhang H."/>
            <person name="Harpsoee K."/>
            <person name="Li H."/>
            <person name="Zhang Y."/>
            <person name="You C."/>
            <person name="Yu X."/>
            <person name="Jiang Y."/>
            <person name="Zhang Y."/>
            <person name="Gloriam D.E."/>
            <person name="Xu H.E."/>
        </authorList>
    </citation>
    <scope>STRUCTURE BY ELECTRON MICROSCOPY (3.3 ANGSTROMS) OF 2-440 IN COMPLEX WITH SEROTONIN; GNB1; GNB2 AND GNAS2</scope>
    <scope>FUNCTION</scope>
    <scope>MUTAGENESIS OF ASP-106; CYS-110; SER-111; LEU-182; ALA-192; TRP-281; PHE-284; PHE-285 AND TYR-310</scope>
</reference>
<reference evidence="16" key="9">
    <citation type="journal article" date="2023" name="Proc. Natl. Acad. Sci. U.S.A.">
        <title>Structural insights into constitutive activity of 5-HT6 receptor.</title>
        <authorList>
            <person name="He L."/>
            <person name="Zhao Q."/>
            <person name="Qi J."/>
            <person name="Wang Y."/>
            <person name="Han W."/>
            <person name="Chen Z."/>
            <person name="Cong Y."/>
            <person name="Wang S."/>
        </authorList>
    </citation>
    <scope>STRUCTURE BY ELECTRON MICROSCOPY (3.3 ANGSTROMS) OF 24-345 IN COMPLEX WITH SEROTONIN; GNB1 AND GNB2</scope>
    <scope>FUNCTION</scope>
    <scope>MUTAGENESIS OF ASP-106 AND TRP-281</scope>
</reference>
<reference evidence="17" key="10">
    <citation type="journal article" date="2023" name="Biochem. Biophys. Res. Commun.">
        <title>Structural insight into the selective agonist ST1936 binding of serotonin receptor 5-HT6.</title>
        <authorList>
            <person name="Pei Y."/>
            <person name="Wen X."/>
            <person name="Guo S.C."/>
            <person name="Yang Z.S."/>
            <person name="Zhang R."/>
            <person name="Xiao P."/>
            <person name="Sun J.P."/>
        </authorList>
    </citation>
    <scope>X-RAY CRYSTALLOGRAPHY (3.09 ANGSTROMS) IN COMPLEX WITH GNB1; GNB2 AND GNAS2</scope>
    <scope>FUNCTION</scope>
    <scope>SUBCELLULAR LOCATION</scope>
    <scope>MUTAGENESIS OF SER-111; PHE-188; PHE-284 AND TYR-310</scope>
</reference>
<gene>
    <name evidence="14" type="primary">HTR6</name>
</gene>
<organism>
    <name type="scientific">Homo sapiens</name>
    <name type="common">Human</name>
    <dbReference type="NCBI Taxonomy" id="9606"/>
    <lineage>
        <taxon>Eukaryota</taxon>
        <taxon>Metazoa</taxon>
        <taxon>Chordata</taxon>
        <taxon>Craniata</taxon>
        <taxon>Vertebrata</taxon>
        <taxon>Euteleostomi</taxon>
        <taxon>Mammalia</taxon>
        <taxon>Eutheria</taxon>
        <taxon>Euarchontoglires</taxon>
        <taxon>Primates</taxon>
        <taxon>Haplorrhini</taxon>
        <taxon>Catarrhini</taxon>
        <taxon>Hominidae</taxon>
        <taxon>Homo</taxon>
    </lineage>
</organism>
<feature type="chain" id="PRO_0000068974" description="5-hydroxytryptamine receptor 6">
    <location>
        <begin position="1"/>
        <end position="440"/>
    </location>
</feature>
<feature type="topological domain" description="Extracellular" evidence="7 8 9 15 16 17">
    <location>
        <begin position="1"/>
        <end position="27"/>
    </location>
</feature>
<feature type="transmembrane region" description="Helical; Name=1" evidence="7 8 9 15 16 17">
    <location>
        <begin position="28"/>
        <end position="52"/>
    </location>
</feature>
<feature type="topological domain" description="Cytoplasmic" evidence="7 8 15 16">
    <location>
        <begin position="53"/>
        <end position="62"/>
    </location>
</feature>
<feature type="transmembrane region" description="Helical; Name=2" evidence="7 8 9 15 16 17">
    <location>
        <begin position="63"/>
        <end position="88"/>
    </location>
</feature>
<feature type="topological domain" description="Extracellular" evidence="7 8 9 15 16 17">
    <location>
        <begin position="89"/>
        <end position="96"/>
    </location>
</feature>
<feature type="transmembrane region" description="Helical; Name=3" evidence="7 8 9 15 16 17">
    <location>
        <begin position="97"/>
        <end position="122"/>
    </location>
</feature>
<feature type="topological domain" description="Cytoplasmic" evidence="7 8 9 15 16 17">
    <location>
        <begin position="123"/>
        <end position="142"/>
    </location>
</feature>
<feature type="transmembrane region" description="Helical; Name=4" evidence="7 8 9 15 16 17">
    <location>
        <begin position="143"/>
        <end position="167"/>
    </location>
</feature>
<feature type="topological domain" description="Extracellular" evidence="7 8 9 15 16 17">
    <location>
        <begin position="168"/>
        <end position="185"/>
    </location>
</feature>
<feature type="transmembrane region" description="Helical; Name=5" evidence="7 15">
    <location>
        <begin position="186"/>
        <end position="209"/>
    </location>
</feature>
<feature type="topological domain" description="Cytoplasmic" evidence="7 8 9 15 16 17">
    <location>
        <begin position="210"/>
        <end position="266"/>
    </location>
</feature>
<feature type="transmembrane region" description="Helical; Name=6" evidence="7 8 9 15 16 17">
    <location>
        <begin position="267"/>
        <end position="293"/>
    </location>
</feature>
<feature type="topological domain" description="Extracellular" evidence="7 8 9 15 16 17">
    <location>
        <begin position="294"/>
        <end position="299"/>
    </location>
</feature>
<feature type="transmembrane region" description="Helical; Name=7" evidence="7 8 9 15 16 17">
    <location>
        <begin position="300"/>
        <end position="323"/>
    </location>
</feature>
<feature type="topological domain" description="Cytoplasmic" evidence="7 8 9 15 16 17">
    <location>
        <begin position="324"/>
        <end position="440"/>
    </location>
</feature>
<feature type="region of interest" description="Disordered" evidence="5">
    <location>
        <begin position="346"/>
        <end position="392"/>
    </location>
</feature>
<feature type="compositionally biased region" description="Polar residues" evidence="5">
    <location>
        <begin position="347"/>
        <end position="358"/>
    </location>
</feature>
<feature type="compositionally biased region" description="Low complexity" evidence="5">
    <location>
        <begin position="362"/>
        <end position="371"/>
    </location>
</feature>
<feature type="binding site" evidence="13">
    <location>
        <position position="106"/>
    </location>
    <ligand>
        <name>serotonin</name>
        <dbReference type="ChEBI" id="CHEBI:350546"/>
    </ligand>
</feature>
<feature type="binding site" evidence="7 15">
    <location>
        <position position="288"/>
    </location>
    <ligand>
        <name>serotonin</name>
        <dbReference type="ChEBI" id="CHEBI:350546"/>
    </ligand>
</feature>
<feature type="disulfide bond" evidence="4 7 9 15 17">
    <location>
        <begin position="99"/>
        <end position="180"/>
    </location>
</feature>
<feature type="mutagenesis site" description="Abolished G-protein coupled receptor activity in response to serotonin." evidence="7 8">
    <original>D</original>
    <variation>A</variation>
    <location>
        <position position="106"/>
    </location>
</feature>
<feature type="mutagenesis site" description="Decreased G-protein coupled receptor activity in response to serotonin." evidence="7">
    <original>C</original>
    <variation>A</variation>
    <location>
        <position position="110"/>
    </location>
</feature>
<feature type="mutagenesis site" description="Decreased G-protein coupled receptor activity in response to serotonin." evidence="7 9">
    <original>S</original>
    <variation>A</variation>
    <variation>T</variation>
    <location>
        <position position="111"/>
    </location>
</feature>
<feature type="mutagenesis site" description="Decreased G-protein coupled receptor activity in response to serotonin." evidence="7">
    <original>L</original>
    <variation>A</variation>
    <location>
        <position position="182"/>
    </location>
</feature>
<feature type="mutagenesis site" description="Decreased G-protein coupled receptor activity in response to serotonin." evidence="9">
    <original>F</original>
    <variation>A</variation>
    <location>
        <position position="188"/>
    </location>
</feature>
<feature type="mutagenesis site" description="Abolished G-protein coupled receptor activity in response to serotonin." evidence="7">
    <original>A</original>
    <variation>Y</variation>
    <location>
        <position position="192"/>
    </location>
</feature>
<feature type="mutagenesis site" description="Abolished G-protein coupled receptor activity in response to serotonin." evidence="7 8">
    <original>W</original>
    <variation>A</variation>
    <location>
        <position position="281"/>
    </location>
</feature>
<feature type="mutagenesis site" description="Abolished G-protein coupled receptor activity in response to serotonin." evidence="7 9">
    <original>F</original>
    <variation>A</variation>
    <location>
        <position position="284"/>
    </location>
</feature>
<feature type="mutagenesis site" description="Decreased G-protein coupled receptor activity in response to serotonin." evidence="7">
    <original>F</original>
    <variation>A</variation>
    <location>
        <position position="285"/>
    </location>
</feature>
<feature type="mutagenesis site" description="Decreased G-protein coupled receptor activity in response to serotonin." evidence="7 9">
    <original>Y</original>
    <variation>A</variation>
    <location>
        <position position="310"/>
    </location>
</feature>
<feature type="sequence conflict" description="In Ref. 6; CAA88929." evidence="12" ref="6">
    <original>V</original>
    <variation>M</variation>
    <location>
        <position position="247"/>
    </location>
</feature>
<feature type="helix" evidence="18">
    <location>
        <begin position="32"/>
        <end position="53"/>
    </location>
</feature>
<feature type="helix" evidence="18">
    <location>
        <begin position="55"/>
        <end position="57"/>
    </location>
</feature>
<feature type="helix" evidence="18">
    <location>
        <begin position="60"/>
        <end position="62"/>
    </location>
</feature>
<feature type="helix" evidence="18">
    <location>
        <begin position="63"/>
        <end position="78"/>
    </location>
</feature>
<feature type="helix" evidence="18">
    <location>
        <begin position="80"/>
        <end position="89"/>
    </location>
</feature>
<feature type="helix" evidence="18">
    <location>
        <begin position="96"/>
        <end position="98"/>
    </location>
</feature>
<feature type="helix" evidence="18">
    <location>
        <begin position="99"/>
        <end position="128"/>
    </location>
</feature>
<feature type="strand" evidence="18">
    <location>
        <begin position="131"/>
        <end position="133"/>
    </location>
</feature>
<feature type="helix" evidence="18">
    <location>
        <begin position="134"/>
        <end position="137"/>
    </location>
</feature>
<feature type="helix" evidence="18">
    <location>
        <begin position="140"/>
        <end position="159"/>
    </location>
</feature>
<feature type="turn" evidence="18">
    <location>
        <begin position="160"/>
        <end position="163"/>
    </location>
</feature>
<feature type="turn" evidence="19">
    <location>
        <begin position="165"/>
        <end position="167"/>
    </location>
</feature>
<feature type="strand" evidence="18">
    <location>
        <begin position="177"/>
        <end position="179"/>
    </location>
</feature>
<feature type="helix" evidence="18">
    <location>
        <begin position="186"/>
        <end position="196"/>
    </location>
</feature>
<feature type="helix" evidence="18">
    <location>
        <begin position="198"/>
        <end position="223"/>
    </location>
</feature>
<feature type="helix" evidence="18">
    <location>
        <begin position="265"/>
        <end position="293"/>
    </location>
</feature>
<feature type="helix" evidence="18">
    <location>
        <begin position="299"/>
        <end position="315"/>
    </location>
</feature>
<feature type="turn" evidence="18">
    <location>
        <begin position="317"/>
        <end position="320"/>
    </location>
</feature>
<feature type="helix" evidence="18">
    <location>
        <begin position="321"/>
        <end position="323"/>
    </location>
</feature>
<feature type="helix" evidence="18">
    <location>
        <begin position="325"/>
        <end position="334"/>
    </location>
</feature>
<proteinExistence type="evidence at protein level"/>
<sequence length="440" mass="46954">MVPEPGPTANSTPAWGAGPPSAPGGSGWVAAALCVVIALTAAANSLLIALICTQPALRNTSNFFLVSLFTSDLMVGLVVMPPAMLNALYGRWVLARGLCLLWTAFDVMCCSASILNLCLISLDRYLLILSPLRYKLRMTPLRALALVLGAWSLAALASFLPLLLGWHELGHARPPVPGQCRLLASLPFVLVASGLTFFLPSGAICFTYCRILLAARKQAVQVASLTTGMASQASETLQVPRTPRPGVESADSRRLATKHSRKALKASLTLGILLGMFFVTWLPFFVANIVQAVCDCISPGLFDVLTWLGYCNSTMNPIIYPLFMRDFKRALGRFLPCPRCPRERQASLASPSLRTSHSGPRPGLSLQQVLPLPLPPDSDSDSDAGSGGSSGLRLTAQLLLPGEATQDPPLPTRAAAAVNFFNIDPAEPELRPHPLGIPTN</sequence>
<comment type="function">
    <text evidence="1 3 6 7 8 9 10">G-protein coupled receptor for 5-hydroxytryptamine (serotonin), a biogenic hormone that functions as a neurotransmitter, a hormone and a mitogen (PubMed:35714614, PubMed:36989299, PubMed:37327704, PubMed:8522988). Also has a high affinity for tricyclic psychotropic drugs (By similarity). Ligand binding causes a conformation change that triggers signaling via guanine nucleotide-binding proteins (G proteins) and modulates the activity of downstream effectors (PubMed:35714614). HTR6 is coupled to G(s) G alpha proteins and mediates activation of adenylate cyclase activity (PubMed:35714614, PubMed:37327704). Controls pyramidal neurons migration during corticogenesis, through the regulation of CDK5 activity (By similarity). Is an activator of mTOR signaling (PubMed:23027611).</text>
</comment>
<comment type="subunit">
    <text evidence="3 6">Interacts with MTOR, RPTOR and NF1 (PubMed:23027611). Interacts with CDK5 (By similarity).</text>
</comment>
<comment type="interaction">
    <interactant intactId="EBI-1182222">
        <id>P50406</id>
    </interactant>
    <interactant intactId="EBI-515315">
        <id>P06241</id>
        <label>FYN</label>
    </interactant>
    <organismsDiffer>false</organismsDiffer>
    <experiments>7</experiments>
</comment>
<comment type="interaction">
    <interactant intactId="EBI-1182222">
        <id>P50406</id>
    </interactant>
    <interactant intactId="EBI-764611">
        <id>P46821</id>
        <label>MAP1B</label>
    </interactant>
    <organismsDiffer>false</organismsDiffer>
    <experiments>4</experiments>
</comment>
<comment type="interaction">
    <interactant intactId="EBI-1182222">
        <id>P50406</id>
    </interactant>
    <interactant intactId="EBI-726123">
        <id>P51513</id>
        <label>NOVA1</label>
    </interactant>
    <organismsDiffer>false</organismsDiffer>
    <experiments>9</experiments>
</comment>
<comment type="subcellular location">
    <subcellularLocation>
        <location evidence="9">Cell membrane</location>
        <topology evidence="7 8 9">Multi-pass membrane protein</topology>
    </subcellularLocation>
</comment>
<comment type="tissue specificity">
    <text evidence="10">Expressed in several human brain regions, most prominently in the caudate nucleus.</text>
</comment>
<comment type="domain">
    <text evidence="2">Specificity for G(s) G alpha proteins is determined by the length of transmembrane regions 5 and 6 (TM5 and TM6).</text>
</comment>
<comment type="similarity">
    <text evidence="4">Belongs to the G-protein coupled receptor 1 family.</text>
</comment>